<keyword id="KW-0963">Cytoplasm</keyword>
<keyword id="KW-0444">Lipid biosynthesis</keyword>
<keyword id="KW-0443">Lipid metabolism</keyword>
<keyword id="KW-0520">NAD</keyword>
<keyword id="KW-0521">NADP</keyword>
<keyword id="KW-0547">Nucleotide-binding</keyword>
<keyword id="KW-0560">Oxidoreductase</keyword>
<keyword id="KW-0594">Phospholipid biosynthesis</keyword>
<keyword id="KW-1208">Phospholipid metabolism</keyword>
<keyword id="KW-1185">Reference proteome</keyword>
<comment type="function">
    <text evidence="1">Catalyzes the reduction of the glycolytic intermediate dihydroxyacetone phosphate (DHAP) to sn-glycerol 3-phosphate (G3P), the key precursor for phospholipid synthesis.</text>
</comment>
<comment type="catalytic activity">
    <reaction evidence="1">
        <text>sn-glycerol 3-phosphate + NAD(+) = dihydroxyacetone phosphate + NADH + H(+)</text>
        <dbReference type="Rhea" id="RHEA:11092"/>
        <dbReference type="ChEBI" id="CHEBI:15378"/>
        <dbReference type="ChEBI" id="CHEBI:57540"/>
        <dbReference type="ChEBI" id="CHEBI:57597"/>
        <dbReference type="ChEBI" id="CHEBI:57642"/>
        <dbReference type="ChEBI" id="CHEBI:57945"/>
        <dbReference type="EC" id="1.1.1.94"/>
    </reaction>
    <physiologicalReaction direction="right-to-left" evidence="1">
        <dbReference type="Rhea" id="RHEA:11094"/>
    </physiologicalReaction>
</comment>
<comment type="catalytic activity">
    <reaction evidence="1">
        <text>sn-glycerol 3-phosphate + NADP(+) = dihydroxyacetone phosphate + NADPH + H(+)</text>
        <dbReference type="Rhea" id="RHEA:11096"/>
        <dbReference type="ChEBI" id="CHEBI:15378"/>
        <dbReference type="ChEBI" id="CHEBI:57597"/>
        <dbReference type="ChEBI" id="CHEBI:57642"/>
        <dbReference type="ChEBI" id="CHEBI:57783"/>
        <dbReference type="ChEBI" id="CHEBI:58349"/>
        <dbReference type="EC" id="1.1.1.94"/>
    </reaction>
    <physiologicalReaction direction="right-to-left" evidence="1">
        <dbReference type="Rhea" id="RHEA:11098"/>
    </physiologicalReaction>
</comment>
<comment type="pathway">
    <text evidence="1">Membrane lipid metabolism; glycerophospholipid metabolism.</text>
</comment>
<comment type="subcellular location">
    <subcellularLocation>
        <location evidence="1">Cytoplasm</location>
    </subcellularLocation>
</comment>
<comment type="similarity">
    <text evidence="1">Belongs to the NAD-dependent glycerol-3-phosphate dehydrogenase family.</text>
</comment>
<feature type="chain" id="PRO_0000255354" description="Glycerol-3-phosphate dehydrogenase [NAD(P)+]">
    <location>
        <begin position="1"/>
        <end position="305"/>
    </location>
</feature>
<feature type="active site" description="Proton acceptor" evidence="1">
    <location>
        <position position="170"/>
    </location>
</feature>
<feature type="binding site" evidence="1">
    <location>
        <position position="10"/>
    </location>
    <ligand>
        <name>NADPH</name>
        <dbReference type="ChEBI" id="CHEBI:57783"/>
    </ligand>
</feature>
<feature type="binding site" evidence="1">
    <location>
        <position position="29"/>
    </location>
    <ligand>
        <name>NADPH</name>
        <dbReference type="ChEBI" id="CHEBI:57783"/>
    </ligand>
</feature>
<feature type="binding site" evidence="1">
    <location>
        <position position="87"/>
    </location>
    <ligand>
        <name>NADPH</name>
        <dbReference type="ChEBI" id="CHEBI:57783"/>
    </ligand>
</feature>
<feature type="binding site" evidence="1">
    <location>
        <position position="87"/>
    </location>
    <ligand>
        <name>sn-glycerol 3-phosphate</name>
        <dbReference type="ChEBI" id="CHEBI:57597"/>
    </ligand>
</feature>
<feature type="binding site" evidence="1">
    <location>
        <position position="115"/>
    </location>
    <ligand>
        <name>sn-glycerol 3-phosphate</name>
        <dbReference type="ChEBI" id="CHEBI:57597"/>
    </ligand>
</feature>
<feature type="binding site" evidence="1">
    <location>
        <position position="117"/>
    </location>
    <ligand>
        <name>sn-glycerol 3-phosphate</name>
        <dbReference type="ChEBI" id="CHEBI:57597"/>
    </ligand>
</feature>
<feature type="binding site" evidence="1">
    <location>
        <position position="119"/>
    </location>
    <ligand>
        <name>NADPH</name>
        <dbReference type="ChEBI" id="CHEBI:57783"/>
    </ligand>
</feature>
<feature type="binding site" evidence="1">
    <location>
        <position position="170"/>
    </location>
    <ligand>
        <name>sn-glycerol 3-phosphate</name>
        <dbReference type="ChEBI" id="CHEBI:57597"/>
    </ligand>
</feature>
<feature type="binding site" evidence="1">
    <location>
        <position position="223"/>
    </location>
    <ligand>
        <name>sn-glycerol 3-phosphate</name>
        <dbReference type="ChEBI" id="CHEBI:57597"/>
    </ligand>
</feature>
<feature type="binding site" evidence="1">
    <location>
        <position position="233"/>
    </location>
    <ligand>
        <name>sn-glycerol 3-phosphate</name>
        <dbReference type="ChEBI" id="CHEBI:57597"/>
    </ligand>
</feature>
<feature type="binding site" evidence="1">
    <location>
        <position position="234"/>
    </location>
    <ligand>
        <name>NADPH</name>
        <dbReference type="ChEBI" id="CHEBI:57783"/>
    </ligand>
</feature>
<feature type="binding site" evidence="1">
    <location>
        <position position="234"/>
    </location>
    <ligand>
        <name>sn-glycerol 3-phosphate</name>
        <dbReference type="ChEBI" id="CHEBI:57597"/>
    </ligand>
</feature>
<feature type="binding site" evidence="1">
    <location>
        <position position="235"/>
    </location>
    <ligand>
        <name>sn-glycerol 3-phosphate</name>
        <dbReference type="ChEBI" id="CHEBI:57597"/>
    </ligand>
</feature>
<feature type="binding site" evidence="1">
    <location>
        <position position="255"/>
    </location>
    <ligand>
        <name>NADPH</name>
        <dbReference type="ChEBI" id="CHEBI:57783"/>
    </ligand>
</feature>
<protein>
    <recommendedName>
        <fullName evidence="1">Glycerol-3-phosphate dehydrogenase [NAD(P)+]</fullName>
        <ecNumber evidence="1">1.1.1.94</ecNumber>
    </recommendedName>
    <alternativeName>
        <fullName evidence="1">NAD(P)(+)-dependent glycerol-3-phosphate dehydrogenase</fullName>
    </alternativeName>
    <alternativeName>
        <fullName evidence="1">NAD(P)H-dependent dihydroxyacetone-phosphate reductase</fullName>
    </alternativeName>
</protein>
<dbReference type="EC" id="1.1.1.94" evidence="1"/>
<dbReference type="EMBL" id="CP000143">
    <property type="protein sequence ID" value="ABA77653.1"/>
    <property type="molecule type" value="Genomic_DNA"/>
</dbReference>
<dbReference type="RefSeq" id="WP_011336800.1">
    <property type="nucleotide sequence ID" value="NC_007493.2"/>
</dbReference>
<dbReference type="RefSeq" id="YP_351554.1">
    <property type="nucleotide sequence ID" value="NC_007493.2"/>
</dbReference>
<dbReference type="SMR" id="Q3J6D1"/>
<dbReference type="STRING" id="272943.RSP_1510"/>
<dbReference type="EnsemblBacteria" id="ABA77653">
    <property type="protein sequence ID" value="ABA77653"/>
    <property type="gene ID" value="RSP_1510"/>
</dbReference>
<dbReference type="GeneID" id="3718674"/>
<dbReference type="KEGG" id="rsp:RSP_1510"/>
<dbReference type="PATRIC" id="fig|272943.9.peg.382"/>
<dbReference type="eggNOG" id="COG0240">
    <property type="taxonomic scope" value="Bacteria"/>
</dbReference>
<dbReference type="OrthoDB" id="9812273at2"/>
<dbReference type="PhylomeDB" id="Q3J6D1"/>
<dbReference type="UniPathway" id="UPA00940"/>
<dbReference type="Proteomes" id="UP000002703">
    <property type="component" value="Chromosome 1"/>
</dbReference>
<dbReference type="GO" id="GO:0005829">
    <property type="term" value="C:cytosol"/>
    <property type="evidence" value="ECO:0007669"/>
    <property type="project" value="TreeGrafter"/>
</dbReference>
<dbReference type="GO" id="GO:0047952">
    <property type="term" value="F:glycerol-3-phosphate dehydrogenase [NAD(P)+] activity"/>
    <property type="evidence" value="ECO:0007669"/>
    <property type="project" value="UniProtKB-UniRule"/>
</dbReference>
<dbReference type="GO" id="GO:0051287">
    <property type="term" value="F:NAD binding"/>
    <property type="evidence" value="ECO:0007669"/>
    <property type="project" value="InterPro"/>
</dbReference>
<dbReference type="GO" id="GO:0005975">
    <property type="term" value="P:carbohydrate metabolic process"/>
    <property type="evidence" value="ECO:0007669"/>
    <property type="project" value="InterPro"/>
</dbReference>
<dbReference type="GO" id="GO:0046167">
    <property type="term" value="P:glycerol-3-phosphate biosynthetic process"/>
    <property type="evidence" value="ECO:0007669"/>
    <property type="project" value="UniProtKB-UniRule"/>
</dbReference>
<dbReference type="GO" id="GO:0046168">
    <property type="term" value="P:glycerol-3-phosphate catabolic process"/>
    <property type="evidence" value="ECO:0007669"/>
    <property type="project" value="InterPro"/>
</dbReference>
<dbReference type="GO" id="GO:0006650">
    <property type="term" value="P:glycerophospholipid metabolic process"/>
    <property type="evidence" value="ECO:0007669"/>
    <property type="project" value="UniProtKB-UniRule"/>
</dbReference>
<dbReference type="GO" id="GO:0008654">
    <property type="term" value="P:phospholipid biosynthetic process"/>
    <property type="evidence" value="ECO:0007669"/>
    <property type="project" value="UniProtKB-KW"/>
</dbReference>
<dbReference type="FunFam" id="1.10.1040.10:FF:000001">
    <property type="entry name" value="Glycerol-3-phosphate dehydrogenase [NAD(P)+]"/>
    <property type="match status" value="1"/>
</dbReference>
<dbReference type="Gene3D" id="1.10.1040.10">
    <property type="entry name" value="N-(1-d-carboxylethyl)-l-norvaline Dehydrogenase, domain 2"/>
    <property type="match status" value="1"/>
</dbReference>
<dbReference type="Gene3D" id="3.40.50.720">
    <property type="entry name" value="NAD(P)-binding Rossmann-like Domain"/>
    <property type="match status" value="1"/>
</dbReference>
<dbReference type="HAMAP" id="MF_00394">
    <property type="entry name" value="NAD_Glyc3P_dehydrog"/>
    <property type="match status" value="1"/>
</dbReference>
<dbReference type="InterPro" id="IPR008927">
    <property type="entry name" value="6-PGluconate_DH-like_C_sf"/>
</dbReference>
<dbReference type="InterPro" id="IPR013328">
    <property type="entry name" value="6PGD_dom2"/>
</dbReference>
<dbReference type="InterPro" id="IPR006168">
    <property type="entry name" value="G3P_DH_NAD-dep"/>
</dbReference>
<dbReference type="InterPro" id="IPR006109">
    <property type="entry name" value="G3P_DH_NAD-dep_C"/>
</dbReference>
<dbReference type="InterPro" id="IPR011128">
    <property type="entry name" value="G3P_DH_NAD-dep_N"/>
</dbReference>
<dbReference type="InterPro" id="IPR036291">
    <property type="entry name" value="NAD(P)-bd_dom_sf"/>
</dbReference>
<dbReference type="NCBIfam" id="NF000940">
    <property type="entry name" value="PRK00094.1-2"/>
    <property type="match status" value="1"/>
</dbReference>
<dbReference type="NCBIfam" id="NF000942">
    <property type="entry name" value="PRK00094.1-4"/>
    <property type="match status" value="1"/>
</dbReference>
<dbReference type="PANTHER" id="PTHR11728">
    <property type="entry name" value="GLYCEROL-3-PHOSPHATE DEHYDROGENASE"/>
    <property type="match status" value="1"/>
</dbReference>
<dbReference type="PANTHER" id="PTHR11728:SF1">
    <property type="entry name" value="GLYCEROL-3-PHOSPHATE DEHYDROGENASE [NAD(+)] 2, CHLOROPLASTIC"/>
    <property type="match status" value="1"/>
</dbReference>
<dbReference type="Pfam" id="PF07479">
    <property type="entry name" value="NAD_Gly3P_dh_C"/>
    <property type="match status" value="1"/>
</dbReference>
<dbReference type="Pfam" id="PF01210">
    <property type="entry name" value="NAD_Gly3P_dh_N"/>
    <property type="match status" value="1"/>
</dbReference>
<dbReference type="PIRSF" id="PIRSF000114">
    <property type="entry name" value="Glycerol-3-P_dh"/>
    <property type="match status" value="1"/>
</dbReference>
<dbReference type="PRINTS" id="PR00077">
    <property type="entry name" value="GPDHDRGNASE"/>
</dbReference>
<dbReference type="SUPFAM" id="SSF48179">
    <property type="entry name" value="6-phosphogluconate dehydrogenase C-terminal domain-like"/>
    <property type="match status" value="1"/>
</dbReference>
<dbReference type="SUPFAM" id="SSF51735">
    <property type="entry name" value="NAD(P)-binding Rossmann-fold domains"/>
    <property type="match status" value="1"/>
</dbReference>
<dbReference type="PROSITE" id="PS00957">
    <property type="entry name" value="NAD_G3PDH"/>
    <property type="match status" value="1"/>
</dbReference>
<proteinExistence type="inferred from homology"/>
<reference key="1">
    <citation type="submission" date="2005-09" db="EMBL/GenBank/DDBJ databases">
        <title>Complete sequence of chromosome 1 of Rhodobacter sphaeroides 2.4.1.</title>
        <authorList>
            <person name="Copeland A."/>
            <person name="Lucas S."/>
            <person name="Lapidus A."/>
            <person name="Barry K."/>
            <person name="Detter J.C."/>
            <person name="Glavina T."/>
            <person name="Hammon N."/>
            <person name="Israni S."/>
            <person name="Pitluck S."/>
            <person name="Richardson P."/>
            <person name="Mackenzie C."/>
            <person name="Choudhary M."/>
            <person name="Larimer F."/>
            <person name="Hauser L.J."/>
            <person name="Land M."/>
            <person name="Donohue T.J."/>
            <person name="Kaplan S."/>
        </authorList>
    </citation>
    <scope>NUCLEOTIDE SEQUENCE [LARGE SCALE GENOMIC DNA]</scope>
    <source>
        <strain>ATCC 17023 / DSM 158 / JCM 6121 / CCUG 31486 / LMG 2827 / NBRC 12203 / NCIMB 8253 / ATH 2.4.1.</strain>
    </source>
</reference>
<accession>Q3J6D1</accession>
<name>GPDA_CERS4</name>
<sequence>MIGILGAGAFGTALAVTLGREQPVTLWARGGTPRLAVDLPEQVQLTADFGEALAGTVLLAVPMQALGGLLRAEAARLQGRALVACCKGVDLATGLGPTGLIAEACPGSPAAILTGPSFAADIARGLPTALTLATQDEAAGEALQRQLSTAALRLYRTTDTVGAELGGALKNVIAIAAGVVIGAGLGQSARAALMTRGYAEMQRLALALGARPETLAGLSGLGDLVLTCTSDQSRNFRYGQALGAGAAFDGSVTVEGRATARAVVDLAVRHGIDMPIAAMVDALVEGRVTLPQAIQSLLSRPLKQE</sequence>
<evidence type="ECO:0000255" key="1">
    <source>
        <dbReference type="HAMAP-Rule" id="MF_00394"/>
    </source>
</evidence>
<organism>
    <name type="scientific">Cereibacter sphaeroides (strain ATCC 17023 / DSM 158 / JCM 6121 / CCUG 31486 / LMG 2827 / NBRC 12203 / NCIMB 8253 / ATH 2.4.1.)</name>
    <name type="common">Rhodobacter sphaeroides</name>
    <dbReference type="NCBI Taxonomy" id="272943"/>
    <lineage>
        <taxon>Bacteria</taxon>
        <taxon>Pseudomonadati</taxon>
        <taxon>Pseudomonadota</taxon>
        <taxon>Alphaproteobacteria</taxon>
        <taxon>Rhodobacterales</taxon>
        <taxon>Paracoccaceae</taxon>
        <taxon>Cereibacter</taxon>
    </lineage>
</organism>
<gene>
    <name evidence="1" type="primary">gpsA</name>
    <name type="ordered locus">RHOS4_00850</name>
    <name type="ordered locus">RSP_1510</name>
</gene>